<reference key="1">
    <citation type="submission" date="2004-11" db="EMBL/GenBank/DDBJ databases">
        <title>Complete genome sequence of Thermus thermophilus HB8.</title>
        <authorList>
            <person name="Masui R."/>
            <person name="Kurokawa K."/>
            <person name="Nakagawa N."/>
            <person name="Tokunaga F."/>
            <person name="Koyama Y."/>
            <person name="Shibata T."/>
            <person name="Oshima T."/>
            <person name="Yokoyama S."/>
            <person name="Yasunaga T."/>
            <person name="Kuramitsu S."/>
        </authorList>
    </citation>
    <scope>NUCLEOTIDE SEQUENCE [LARGE SCALE GENOMIC DNA]</scope>
    <source>
        <strain>ATCC 27634 / DSM 579 / HB8</strain>
    </source>
</reference>
<reference key="2">
    <citation type="journal article" date="1992" name="J. Bacteriol.">
        <title>Identification of the gene encoding transcription factor NusG of Thermus thermophilus.</title>
        <authorList>
            <person name="Heinrich T."/>
            <person name="Schroeder W."/>
            <person name="Erdmann V.A."/>
            <person name="Hartmann R.K."/>
        </authorList>
    </citation>
    <scope>NUCLEOTIDE SEQUENCE [GENOMIC DNA] OF 1-40</scope>
    <source>
        <strain>ATCC 27634 / DSM 579 / HB8</strain>
    </source>
</reference>
<reference key="3">
    <citation type="journal article" date="2000" name="Biol. Chem.">
        <title>Identification of the 50S ribosomal proteins from the eubacterium Thermus thermophilus.</title>
        <authorList>
            <person name="Katsani K.R."/>
            <person name="Tsiboli P."/>
            <person name="Anagnostopoulos K."/>
            <person name="Urlaub H."/>
            <person name="Choli-Papadopoulou T."/>
        </authorList>
    </citation>
    <scope>PROTEIN SEQUENCE OF 19-32 AND 71-85</scope>
    <scope>BLOCKAGE OF N-TERMINUS</scope>
    <source>
        <strain>ATCC 27634 / DSM 579 / HB8</strain>
    </source>
</reference>
<reference key="4">
    <citation type="journal article" date="1999" name="J. Protein Chem.">
        <title>Structural and functional studies on the overproduced L11 protein from Thermus thermophilus.</title>
        <authorList>
            <person name="Triantafillidou D."/>
            <person name="Simitsopoulou M."/>
            <person name="Franceschi F."/>
            <person name="Choli-Papadopoulou T."/>
        </authorList>
    </citation>
    <scope>METHYLATION AT LYS-3</scope>
</reference>
<reference key="5">
    <citation type="journal article" date="2004" name="J. Bacteriol.">
        <title>Thermus thermophilus L11 methyltransferase, PrmA, is dispensable for growth and preferentially modifies free ribosomal protein L11 prior to ribosome assembly.</title>
        <authorList>
            <person name="Cameron D.M."/>
            <person name="Gregory S.T."/>
            <person name="Thompson J."/>
            <person name="Suh M.-J."/>
            <person name="Limbach P.A."/>
            <person name="Dahlberg A.E."/>
        </authorList>
    </citation>
    <scope>MASS SPECTROMETRY</scope>
    <scope>METHYLATION</scope>
</reference>
<reference key="6">
    <citation type="journal article" date="2005" name="Proteomics">
        <title>Extending ribosomal protein identifications to unsequenced bacterial strains using matrix-assisted laser desorption/ionization mass spectrometry.</title>
        <authorList>
            <person name="Suh M.-J."/>
            <person name="Hamburg D.M."/>
            <person name="Gregory S.T."/>
            <person name="Dahlberg A.E."/>
            <person name="Limbach P.A."/>
        </authorList>
    </citation>
    <scope>MASS SPECTROMETRY</scope>
    <source>
        <strain>ATCC 27634 / DSM 579 / HB8</strain>
    </source>
</reference>
<reference key="7">
    <citation type="journal article" date="2001" name="Cell">
        <title>The path of messenger RNA through the ribosome.</title>
        <authorList>
            <person name="Yusupova G.Z."/>
            <person name="Yusupov M.M."/>
            <person name="Cate J.H.D."/>
            <person name="Noller H.F."/>
        </authorList>
    </citation>
    <scope>X-RAY CRYSTALLOGRAPHY (5.0 ANGSTROMS) OF THE RIBOSOME</scope>
</reference>
<reference key="8">
    <citation type="journal article" date="2001" name="Science">
        <title>Crystal structure of the ribosome at 5.5 A resolution.</title>
        <authorList>
            <person name="Yusupov M.M."/>
            <person name="Yusupova G.Z."/>
            <person name="Baucom A."/>
            <person name="Lieberman K."/>
            <person name="Earnest T.N."/>
            <person name="Cate J.H.D."/>
            <person name="Noller H.F."/>
        </authorList>
    </citation>
    <scope>X-RAY CRYSTALLOGRAPHY (5.5 ANGSTROMS) OF THE RIBOSOME</scope>
</reference>
<reference key="9">
    <citation type="journal article" date="2005" name="Cell">
        <title>Crystal structures of the ribosome in complex with release factors RF1 and RF2 bound to a cognate stop codon.</title>
        <authorList>
            <person name="Petry S."/>
            <person name="Brodersen D.E."/>
            <person name="Murphy F.V."/>
            <person name="Dunham C.M."/>
            <person name="Selmer M."/>
            <person name="Tarry M.J."/>
            <person name="Kelley A.C."/>
            <person name="Ramakrishnan V."/>
        </authorList>
    </citation>
    <scope>X-RAY CRYSTALLOGRAPHY (6.46 ANGSTROMS) OF 70S RIBOSOME</scope>
    <scope>SUBUNIT</scope>
</reference>
<reference key="10">
    <citation type="journal article" date="2008" name="Structure">
        <title>Multiple-site trimethylation of ribosomal protein L11 by the PrmA methyltransferase.</title>
        <authorList>
            <person name="Demirci H."/>
            <person name="Gregory S.T."/>
            <person name="Dahlberg A.E."/>
            <person name="Jogl G."/>
        </authorList>
    </citation>
    <scope>X-RAY CRYSTALLOGRAPHY (1.75 ANGSTROMS) OF 1-147</scope>
    <scope>METHYLATION AT MET-1 AND LYS-39</scope>
</reference>
<reference key="11">
    <citation type="journal article" date="2008" name="Science">
        <title>Insights into translational termination from the structure of RF2 bound to the ribosome.</title>
        <authorList>
            <person name="Weixlbaumer A."/>
            <person name="Jin H."/>
            <person name="Neubauer C."/>
            <person name="Voorhees R.M."/>
            <person name="Petry S."/>
            <person name="Kelley A.C."/>
            <person name="Ramakrishnan V."/>
        </authorList>
    </citation>
    <scope>X-RAY CRYSTALLOGRAPHY (3.45 ANGSTROMS) OF 70S RIBOSOME IN COMPLEX WITH RF2</scope>
    <scope>INTERACTION WITH RF2</scope>
    <scope>SUBUNIT</scope>
</reference>
<reference key="12">
    <citation type="journal article" date="2010" name="Proc. Natl. Acad. Sci. U.S.A.">
        <title>Structure of the 70S ribosome bound to release factor 2 and a substrate analog provides insights into catalysis of peptide release.</title>
        <authorList>
            <person name="Jin H."/>
            <person name="Kelley A.C."/>
            <person name="Loakes D."/>
            <person name="Ramakrishnan V."/>
        </authorList>
    </citation>
    <scope>X-RAY CRYSTALLOGRAPHY (3.10 ANGSTROMS) OF 70S RIBOSOME IN COMPLEX WITH RF2</scope>
    <scope>SUBUNIT</scope>
</reference>
<sequence>MKKVVAVVKLQLPAGKATPAPPVGPALGQHGANIMEFVKAFNAATANMGDAIVPVEITIYADRSFTFVTKTPPASYLIRKAAGLEKGAHKPGREKVGRITWEQVLEIAKQKMPDLNTTDLEAAARMIAGSARSMGVEVVGAPEVKDA</sequence>
<evidence type="ECO:0000250" key="1">
    <source>
        <dbReference type="UniProtKB" id="P0A7J7"/>
    </source>
</evidence>
<evidence type="ECO:0000255" key="2">
    <source>
        <dbReference type="HAMAP-Rule" id="MF_00736"/>
    </source>
</evidence>
<evidence type="ECO:0000269" key="3">
    <source>
    </source>
</evidence>
<evidence type="ECO:0000269" key="4">
    <source>
    </source>
</evidence>
<evidence type="ECO:0000269" key="5">
    <source>
    </source>
</evidence>
<evidence type="ECO:0000269" key="6">
    <source>
    </source>
</evidence>
<evidence type="ECO:0000269" key="7">
    <source>
    </source>
</evidence>
<evidence type="ECO:0000269" key="8">
    <source>
    </source>
</evidence>
<evidence type="ECO:0000269" key="9">
    <source>
    </source>
</evidence>
<evidence type="ECO:0000305" key="10"/>
<evidence type="ECO:0007744" key="11">
    <source>
        <dbReference type="PDB" id="3EGV"/>
    </source>
</evidence>
<evidence type="ECO:0007829" key="12">
    <source>
        <dbReference type="PDB" id="3EGV"/>
    </source>
</evidence>
<feature type="chain" id="PRO_0000104399" description="Large ribosomal subunit protein uL11">
    <location>
        <begin position="1"/>
        <end position="147"/>
    </location>
</feature>
<feature type="modified residue" description="N,N,N-trimethylmethionine" evidence="8 11">
    <location>
        <position position="1"/>
    </location>
</feature>
<feature type="modified residue" description="N6,N6,N6-trimethyllysine" evidence="3">
    <location>
        <position position="3"/>
    </location>
</feature>
<feature type="modified residue" description="N6,N6,N6-trimethyllysine" evidence="8 11">
    <location>
        <position position="39"/>
    </location>
</feature>
<feature type="modified residue" description="N6,N6,N6-trimethyllysine" evidence="1">
    <location>
        <position position="70"/>
    </location>
</feature>
<feature type="sequence conflict" description="In Ref. 3; AA sequence." evidence="10" ref="3">
    <original>A</original>
    <variation>G</variation>
    <location>
        <position position="20"/>
    </location>
</feature>
<feature type="sequence conflict" description="In Ref. 2; L10348." evidence="10" ref="2">
    <original>V</original>
    <variation>G</variation>
    <location>
        <position position="23"/>
    </location>
</feature>
<feature type="strand" evidence="12">
    <location>
        <begin position="4"/>
        <end position="13"/>
    </location>
</feature>
<feature type="helix" evidence="12">
    <location>
        <begin position="23"/>
        <end position="28"/>
    </location>
</feature>
<feature type="turn" evidence="12">
    <location>
        <begin position="29"/>
        <end position="31"/>
    </location>
</feature>
<feature type="helix" evidence="12">
    <location>
        <begin position="34"/>
        <end position="44"/>
    </location>
</feature>
<feature type="turn" evidence="12">
    <location>
        <begin position="45"/>
        <end position="47"/>
    </location>
</feature>
<feature type="strand" evidence="12">
    <location>
        <begin position="52"/>
        <end position="60"/>
    </location>
</feature>
<feature type="strand" evidence="12">
    <location>
        <begin position="65"/>
        <end position="69"/>
    </location>
</feature>
<feature type="helix" evidence="12">
    <location>
        <begin position="74"/>
        <end position="77"/>
    </location>
</feature>
<name>RL11_THET8</name>
<protein>
    <recommendedName>
        <fullName evidence="2">Large ribosomal subunit protein uL11</fullName>
    </recommendedName>
    <alternativeName>
        <fullName evidence="10">50S ribosomal protein L11</fullName>
    </alternativeName>
</protein>
<gene>
    <name evidence="2" type="primary">rplK</name>
    <name type="ordered locus">TTHA0247</name>
</gene>
<accession>Q5SLP6</accession>
<organism>
    <name type="scientific">Thermus thermophilus (strain ATCC 27634 / DSM 579 / HB8)</name>
    <dbReference type="NCBI Taxonomy" id="300852"/>
    <lineage>
        <taxon>Bacteria</taxon>
        <taxon>Thermotogati</taxon>
        <taxon>Deinococcota</taxon>
        <taxon>Deinococci</taxon>
        <taxon>Thermales</taxon>
        <taxon>Thermaceae</taxon>
        <taxon>Thermus</taxon>
    </lineage>
</organism>
<comment type="function">
    <text>Forms part of the ribosomal stalk which helps the ribosome interact with GTP-bound translation factors. The stalk extends beyond the surface of the 70S ribosome and is preferentially stabilized in 70S versus 50S crystals.</text>
</comment>
<comment type="function">
    <text>In the 70S ribosome is in a position where it could interact transiently with the A site tRNA during translation.</text>
</comment>
<comment type="subunit">
    <text evidence="4 5 9">Part of the ribosomal stalk of the 50S ribosomal subunit. Interacts with L10 and the large rRNA to form the base of the stalk. L10 forms an elongated spine to which 3 L12 dimers bind in a sequential fashion forming a heptameric L10(L12)2(L12)2(L12)2 complex. Contacts one of the L7 dimers. Interacts with RF2 (release factor 2) (PubMed:18988853).</text>
</comment>
<comment type="PTM">
    <text evidence="3 6">The protein probably contains twelve methyl groups; at least one lysine residue (Lys-3) is known to be trimethylated. Methylation of the protein is not required for function.</text>
</comment>
<comment type="mass spectrometry">
    <text>Weight of the unmethylated protein.</text>
</comment>
<comment type="mass spectrometry">
    <text>Weight of the methylated protein.</text>
</comment>
<comment type="mass spectrometry"/>
<comment type="similarity">
    <text evidence="2">Belongs to the universal ribosomal protein uL11 family.</text>
</comment>
<keyword id="KW-0002">3D-structure</keyword>
<keyword id="KW-0903">Direct protein sequencing</keyword>
<keyword id="KW-0488">Methylation</keyword>
<keyword id="KW-1185">Reference proteome</keyword>
<keyword id="KW-0687">Ribonucleoprotein</keyword>
<keyword id="KW-0689">Ribosomal protein</keyword>
<keyword id="KW-0694">RNA-binding</keyword>
<keyword id="KW-0699">rRNA-binding</keyword>
<dbReference type="EMBL" id="AP008226">
    <property type="protein sequence ID" value="BAD70070.1"/>
    <property type="molecule type" value="Genomic_DNA"/>
</dbReference>
<dbReference type="EMBL" id="L10348">
    <property type="status" value="NOT_ANNOTATED_CDS"/>
    <property type="molecule type" value="Genomic_DNA"/>
</dbReference>
<dbReference type="RefSeq" id="WP_011174097.1">
    <property type="nucleotide sequence ID" value="NC_006461.1"/>
</dbReference>
<dbReference type="RefSeq" id="YP_143513.1">
    <property type="nucleotide sequence ID" value="NC_006461.1"/>
</dbReference>
<dbReference type="PDB" id="3EGV">
    <property type="method" value="X-ray"/>
    <property type="resolution" value="1.75 A"/>
    <property type="chains" value="B=2-147"/>
</dbReference>
<dbReference type="PDB" id="4V42">
    <property type="method" value="X-ray"/>
    <property type="resolution" value="5.50 A"/>
    <property type="chains" value="BL=9-116"/>
</dbReference>
<dbReference type="PDB" id="4V4P">
    <property type="method" value="X-ray"/>
    <property type="resolution" value="5.50 A"/>
    <property type="chains" value="L=6-116"/>
</dbReference>
<dbReference type="PDB" id="4V4T">
    <property type="method" value="X-ray"/>
    <property type="resolution" value="6.46 A"/>
    <property type="chains" value="K=1-141"/>
</dbReference>
<dbReference type="PDB" id="4V4X">
    <property type="method" value="X-ray"/>
    <property type="resolution" value="5.00 A"/>
    <property type="chains" value="BL=1-147"/>
</dbReference>
<dbReference type="PDB" id="4V4Y">
    <property type="method" value="X-ray"/>
    <property type="resolution" value="5.50 A"/>
    <property type="chains" value="BL=1-147"/>
</dbReference>
<dbReference type="PDB" id="4V4Z">
    <property type="method" value="X-ray"/>
    <property type="resolution" value="4.51 A"/>
    <property type="chains" value="BL=1-147"/>
</dbReference>
<dbReference type="PDB" id="4V51">
    <property type="method" value="X-ray"/>
    <property type="resolution" value="2.80 A"/>
    <property type="chains" value="K=1-147"/>
</dbReference>
<dbReference type="PDB" id="4V5E">
    <property type="method" value="X-ray"/>
    <property type="resolution" value="3.45 A"/>
    <property type="chains" value="BK/DK=1-147"/>
</dbReference>
<dbReference type="PDB" id="4V5F">
    <property type="method" value="X-ray"/>
    <property type="resolution" value="3.60 A"/>
    <property type="chains" value="BK/DK=1-147"/>
</dbReference>
<dbReference type="PDB" id="4V5J">
    <property type="method" value="X-ray"/>
    <property type="resolution" value="3.10 A"/>
    <property type="chains" value="BK/DK=1-147"/>
</dbReference>
<dbReference type="PDB" id="4V5M">
    <property type="method" value="EM"/>
    <property type="resolution" value="7.80 A"/>
    <property type="chains" value="BK=1-147"/>
</dbReference>
<dbReference type="PDB" id="4V5N">
    <property type="method" value="EM"/>
    <property type="resolution" value="7.60 A"/>
    <property type="chains" value="BK=1-147"/>
</dbReference>
<dbReference type="PDB" id="4V68">
    <property type="method" value="EM"/>
    <property type="resolution" value="6.40 A"/>
    <property type="chains" value="BL=2-139"/>
</dbReference>
<dbReference type="PDB" id="4V6F">
    <property type="method" value="X-ray"/>
    <property type="resolution" value="3.10 A"/>
    <property type="chains" value="DL=1-147"/>
</dbReference>
<dbReference type="PDB" id="4V9H">
    <property type="method" value="X-ray"/>
    <property type="resolution" value="2.86 A"/>
    <property type="chains" value="BK=1-147"/>
</dbReference>
<dbReference type="PDB" id="4W2E">
    <property type="method" value="X-ray"/>
    <property type="resolution" value="2.90 A"/>
    <property type="chains" value="K=1-147"/>
</dbReference>
<dbReference type="PDB" id="4WPO">
    <property type="method" value="X-ray"/>
    <property type="resolution" value="2.80 A"/>
    <property type="chains" value="AL/CL=1-147"/>
</dbReference>
<dbReference type="PDB" id="4WQF">
    <property type="method" value="X-ray"/>
    <property type="resolution" value="2.80 A"/>
    <property type="chains" value="AL/CL=1-147"/>
</dbReference>
<dbReference type="PDB" id="4WQU">
    <property type="method" value="X-ray"/>
    <property type="resolution" value="2.80 A"/>
    <property type="chains" value="AL/CL=1-147"/>
</dbReference>
<dbReference type="PDB" id="4WQY">
    <property type="method" value="X-ray"/>
    <property type="resolution" value="2.80 A"/>
    <property type="chains" value="AL/CL=1-147"/>
</dbReference>
<dbReference type="PDB" id="5A9Z">
    <property type="method" value="EM"/>
    <property type="resolution" value="4.70 A"/>
    <property type="chains" value="AJ=4-137"/>
</dbReference>
<dbReference type="PDB" id="5AA0">
    <property type="method" value="EM"/>
    <property type="resolution" value="5.00 A"/>
    <property type="chains" value="AJ=4-137"/>
</dbReference>
<dbReference type="PDB" id="5D8B">
    <property type="method" value="X-ray"/>
    <property type="resolution" value="3.63 A"/>
    <property type="chains" value="CB/G=1-147"/>
</dbReference>
<dbReference type="PDB" id="5HAU">
    <property type="method" value="X-ray"/>
    <property type="resolution" value="3.00 A"/>
    <property type="chains" value="1K/2K=1-147"/>
</dbReference>
<dbReference type="PDB" id="5IMQ">
    <property type="method" value="EM"/>
    <property type="resolution" value="3.80 A"/>
    <property type="chains" value="3=1-147"/>
</dbReference>
<dbReference type="PDB" id="5IMR">
    <property type="method" value="EM"/>
    <property type="chains" value="3=1-147"/>
</dbReference>
<dbReference type="PDB" id="5J8B">
    <property type="method" value="X-ray"/>
    <property type="resolution" value="2.60 A"/>
    <property type="chains" value="K=1-147"/>
</dbReference>
<dbReference type="PDB" id="5ZLU">
    <property type="method" value="EM"/>
    <property type="resolution" value="3.60 A"/>
    <property type="chains" value="f=1-147"/>
</dbReference>
<dbReference type="PDB" id="6C5L">
    <property type="method" value="X-ray"/>
    <property type="resolution" value="3.20 A"/>
    <property type="chains" value="BK/DK=1-147"/>
</dbReference>
<dbReference type="PDB" id="6GSL">
    <property type="method" value="X-ray"/>
    <property type="resolution" value="3.16 A"/>
    <property type="chains" value="48=1-147"/>
</dbReference>
<dbReference type="PDBsum" id="3EGV"/>
<dbReference type="PDBsum" id="4V42"/>
<dbReference type="PDBsum" id="4V4P"/>
<dbReference type="PDBsum" id="4V4T"/>
<dbReference type="PDBsum" id="4V4X"/>
<dbReference type="PDBsum" id="4V4Y"/>
<dbReference type="PDBsum" id="4V4Z"/>
<dbReference type="PDBsum" id="4V51"/>
<dbReference type="PDBsum" id="4V5E"/>
<dbReference type="PDBsum" id="4V5F"/>
<dbReference type="PDBsum" id="4V5J"/>
<dbReference type="PDBsum" id="4V5M"/>
<dbReference type="PDBsum" id="4V5N"/>
<dbReference type="PDBsum" id="4V68"/>
<dbReference type="PDBsum" id="4V6F"/>
<dbReference type="PDBsum" id="4V9H"/>
<dbReference type="PDBsum" id="4W2E"/>
<dbReference type="PDBsum" id="4WPO"/>
<dbReference type="PDBsum" id="4WQF"/>
<dbReference type="PDBsum" id="4WQU"/>
<dbReference type="PDBsum" id="4WQY"/>
<dbReference type="PDBsum" id="5A9Z"/>
<dbReference type="PDBsum" id="5AA0"/>
<dbReference type="PDBsum" id="5D8B"/>
<dbReference type="PDBsum" id="5HAU"/>
<dbReference type="PDBsum" id="5IMQ"/>
<dbReference type="PDBsum" id="5IMR"/>
<dbReference type="PDBsum" id="5J8B"/>
<dbReference type="PDBsum" id="5ZLU"/>
<dbReference type="PDBsum" id="6C5L"/>
<dbReference type="PDBsum" id="6GSL"/>
<dbReference type="BMRB" id="Q5SLP6"/>
<dbReference type="EMDB" id="EMD-6934"/>
<dbReference type="SMR" id="Q5SLP6"/>
<dbReference type="IntAct" id="Q5SLP6">
    <property type="interactions" value="47"/>
</dbReference>
<dbReference type="MINT" id="Q5SLP6"/>
<dbReference type="EnsemblBacteria" id="BAD70070">
    <property type="protein sequence ID" value="BAD70070"/>
    <property type="gene ID" value="BAD70070"/>
</dbReference>
<dbReference type="GeneID" id="3168343"/>
<dbReference type="KEGG" id="ttj:TTHA0247"/>
<dbReference type="PATRIC" id="fig|300852.9.peg.247"/>
<dbReference type="eggNOG" id="COG0080">
    <property type="taxonomic scope" value="Bacteria"/>
</dbReference>
<dbReference type="HOGENOM" id="CLU_074237_2_0_0"/>
<dbReference type="PhylomeDB" id="Q5SLP6"/>
<dbReference type="EvolutionaryTrace" id="Q5SLP6"/>
<dbReference type="Proteomes" id="UP000000532">
    <property type="component" value="Chromosome"/>
</dbReference>
<dbReference type="GO" id="GO:0022625">
    <property type="term" value="C:cytosolic large ribosomal subunit"/>
    <property type="evidence" value="ECO:0007669"/>
    <property type="project" value="TreeGrafter"/>
</dbReference>
<dbReference type="GO" id="GO:0070180">
    <property type="term" value="F:large ribosomal subunit rRNA binding"/>
    <property type="evidence" value="ECO:0007669"/>
    <property type="project" value="UniProtKB-UniRule"/>
</dbReference>
<dbReference type="GO" id="GO:0003735">
    <property type="term" value="F:structural constituent of ribosome"/>
    <property type="evidence" value="ECO:0007669"/>
    <property type="project" value="InterPro"/>
</dbReference>
<dbReference type="GO" id="GO:0006412">
    <property type="term" value="P:translation"/>
    <property type="evidence" value="ECO:0007669"/>
    <property type="project" value="UniProtKB-UniRule"/>
</dbReference>
<dbReference type="CDD" id="cd00349">
    <property type="entry name" value="Ribosomal_L11"/>
    <property type="match status" value="1"/>
</dbReference>
<dbReference type="FunFam" id="1.10.10.250:FF:000001">
    <property type="entry name" value="50S ribosomal protein L11"/>
    <property type="match status" value="1"/>
</dbReference>
<dbReference type="FunFam" id="3.30.1550.10:FF:000001">
    <property type="entry name" value="50S ribosomal protein L11"/>
    <property type="match status" value="1"/>
</dbReference>
<dbReference type="Gene3D" id="1.10.10.250">
    <property type="entry name" value="Ribosomal protein L11, C-terminal domain"/>
    <property type="match status" value="1"/>
</dbReference>
<dbReference type="Gene3D" id="3.30.1550.10">
    <property type="entry name" value="Ribosomal protein L11/L12, N-terminal domain"/>
    <property type="match status" value="1"/>
</dbReference>
<dbReference type="HAMAP" id="MF_00736">
    <property type="entry name" value="Ribosomal_uL11"/>
    <property type="match status" value="1"/>
</dbReference>
<dbReference type="InterPro" id="IPR000911">
    <property type="entry name" value="Ribosomal_uL11"/>
</dbReference>
<dbReference type="InterPro" id="IPR006519">
    <property type="entry name" value="Ribosomal_uL11_bac-typ"/>
</dbReference>
<dbReference type="InterPro" id="IPR020783">
    <property type="entry name" value="Ribosomal_uL11_C"/>
</dbReference>
<dbReference type="InterPro" id="IPR036769">
    <property type="entry name" value="Ribosomal_uL11_C_sf"/>
</dbReference>
<dbReference type="InterPro" id="IPR020785">
    <property type="entry name" value="Ribosomal_uL11_CS"/>
</dbReference>
<dbReference type="InterPro" id="IPR020784">
    <property type="entry name" value="Ribosomal_uL11_N"/>
</dbReference>
<dbReference type="InterPro" id="IPR036796">
    <property type="entry name" value="Ribosomal_uL11_N_sf"/>
</dbReference>
<dbReference type="NCBIfam" id="TIGR01632">
    <property type="entry name" value="L11_bact"/>
    <property type="match status" value="1"/>
</dbReference>
<dbReference type="PANTHER" id="PTHR11661">
    <property type="entry name" value="60S RIBOSOMAL PROTEIN L12"/>
    <property type="match status" value="1"/>
</dbReference>
<dbReference type="PANTHER" id="PTHR11661:SF1">
    <property type="entry name" value="LARGE RIBOSOMAL SUBUNIT PROTEIN UL11M"/>
    <property type="match status" value="1"/>
</dbReference>
<dbReference type="Pfam" id="PF00298">
    <property type="entry name" value="Ribosomal_L11"/>
    <property type="match status" value="1"/>
</dbReference>
<dbReference type="Pfam" id="PF03946">
    <property type="entry name" value="Ribosomal_L11_N"/>
    <property type="match status" value="1"/>
</dbReference>
<dbReference type="SMART" id="SM00649">
    <property type="entry name" value="RL11"/>
    <property type="match status" value="1"/>
</dbReference>
<dbReference type="SUPFAM" id="SSF54747">
    <property type="entry name" value="Ribosomal L11/L12e N-terminal domain"/>
    <property type="match status" value="1"/>
</dbReference>
<dbReference type="SUPFAM" id="SSF46906">
    <property type="entry name" value="Ribosomal protein L11, C-terminal domain"/>
    <property type="match status" value="1"/>
</dbReference>
<dbReference type="PROSITE" id="PS00359">
    <property type="entry name" value="RIBOSOMAL_L11"/>
    <property type="match status" value="1"/>
</dbReference>
<proteinExistence type="evidence at protein level"/>